<accession>Q925N2</accession>
<name>SFXN2_MOUSE</name>
<keyword id="KW-0007">Acetylation</keyword>
<keyword id="KW-0029">Amino-acid transport</keyword>
<keyword id="KW-0472">Membrane</keyword>
<keyword id="KW-0496">Mitochondrion</keyword>
<keyword id="KW-0999">Mitochondrion inner membrane</keyword>
<keyword id="KW-1000">Mitochondrion outer membrane</keyword>
<keyword id="KW-1185">Reference proteome</keyword>
<keyword id="KW-0812">Transmembrane</keyword>
<keyword id="KW-1133">Transmembrane helix</keyword>
<keyword id="KW-0813">Transport</keyword>
<evidence type="ECO:0000250" key="1">
    <source>
        <dbReference type="UniProtKB" id="Q96NB2"/>
    </source>
</evidence>
<evidence type="ECO:0000255" key="2"/>
<evidence type="ECO:0000269" key="3">
    <source>
    </source>
</evidence>
<evidence type="ECO:0000269" key="4">
    <source>
    </source>
</evidence>
<evidence type="ECO:0000303" key="5">
    <source>
    </source>
</evidence>
<evidence type="ECO:0000305" key="6"/>
<evidence type="ECO:0000312" key="7">
    <source>
        <dbReference type="MGI" id="MGI:2137678"/>
    </source>
</evidence>
<gene>
    <name evidence="5 7" type="primary">Sfxn2</name>
</gene>
<feature type="chain" id="PRO_0000177036" description="Sideroflexin-2">
    <location>
        <begin position="1"/>
        <end position="322"/>
    </location>
</feature>
<feature type="transmembrane region" description="Helical" evidence="2">
    <location>
        <begin position="99"/>
        <end position="119"/>
    </location>
</feature>
<feature type="transmembrane region" description="Helical" evidence="2">
    <location>
        <begin position="147"/>
        <end position="167"/>
    </location>
</feature>
<feature type="transmembrane region" description="Helical" evidence="2">
    <location>
        <begin position="174"/>
        <end position="194"/>
    </location>
</feature>
<feature type="transmembrane region" description="Helical" evidence="2">
    <location>
        <begin position="223"/>
        <end position="243"/>
    </location>
</feature>
<feature type="transmembrane region" description="Helical" evidence="2">
    <location>
        <begin position="266"/>
        <end position="286"/>
    </location>
</feature>
<feature type="modified residue" description="N-acetylmethionine" evidence="1">
    <location>
        <position position="1"/>
    </location>
</feature>
<feature type="sequence conflict" description="In Ref. 2; AAH19808." evidence="6" ref="2">
    <original>G</original>
    <variation>A</variation>
    <location>
        <position position="3"/>
    </location>
</feature>
<comment type="function">
    <text evidence="1">Mitochondrial amino-acid transporter that mediates transport of serine into mitochondria (By similarity). Involved in mitochondrial iron homeostasis by regulating heme biosynthesis (By similarity).</text>
</comment>
<comment type="catalytic activity">
    <reaction evidence="1">
        <text>L-serine(in) = L-serine(out)</text>
        <dbReference type="Rhea" id="RHEA:35031"/>
        <dbReference type="ChEBI" id="CHEBI:33384"/>
    </reaction>
</comment>
<comment type="subcellular location">
    <subcellularLocation>
        <location evidence="1">Mitochondrion inner membrane</location>
        <topology evidence="2">Multi-pass membrane protein</topology>
    </subcellularLocation>
    <subcellularLocation>
        <location evidence="1">Mitochondrion outer membrane</location>
        <topology evidence="2">Multi-pass membrane protein</topology>
    </subcellularLocation>
</comment>
<comment type="tissue specificity">
    <text evidence="3 4">Expressed in brain, heart, kidney, spleen, thymus, liver, stomach and skin.</text>
</comment>
<comment type="similarity">
    <text evidence="6">Belongs to the sideroflexin family.</text>
</comment>
<sequence length="322" mass="36141">MEGDLSGFNIDAPRWDQCTFLGRVKHFFNITDPRTVFASEQELDWAKAVVEKSRMGLVPPGTQMEQLLYAKKLYDSAFHPDTGEKMNVIGRMSFQVPGGMLITGFMLQFYRTMPAVIFWQWVNQSFNALVNYTNRNAASPTSVRQMALSYFTATTTAVATAVGMNMWTKRAPPLVGRWVPFAAVAAANCVNIPMMRQQELIQGICVKDRNQNELGHSQRAAAVGIAQVVISRITMAAPGMILLPVIMERLERLHLMKKVKVMHAPLQVLLCGCFLLFMVPVACGLFPQECELSVSYLEPELRDTIKAKYGEQVLFVYFNKGL</sequence>
<dbReference type="EMBL" id="AF325261">
    <property type="protein sequence ID" value="AAK39429.1"/>
    <property type="molecule type" value="mRNA"/>
</dbReference>
<dbReference type="EMBL" id="BC019808">
    <property type="protein sequence ID" value="AAH19808.1"/>
    <property type="molecule type" value="mRNA"/>
</dbReference>
<dbReference type="CCDS" id="CCDS29880.1"/>
<dbReference type="RefSeq" id="NP_444426.3">
    <property type="nucleotide sequence ID" value="NM_053196.3"/>
</dbReference>
<dbReference type="BioGRID" id="220498">
    <property type="interactions" value="1"/>
</dbReference>
<dbReference type="FunCoup" id="Q925N2">
    <property type="interactions" value="879"/>
</dbReference>
<dbReference type="STRING" id="10090.ENSMUSP00000026011"/>
<dbReference type="GlyGen" id="Q925N2">
    <property type="glycosylation" value="1 site, 1 O-linked glycan (1 site)"/>
</dbReference>
<dbReference type="iPTMnet" id="Q925N2"/>
<dbReference type="PhosphoSitePlus" id="Q925N2"/>
<dbReference type="SwissPalm" id="Q925N2"/>
<dbReference type="jPOST" id="Q925N2"/>
<dbReference type="PaxDb" id="10090-ENSMUSP00000026011"/>
<dbReference type="ProteomicsDB" id="257213"/>
<dbReference type="Pumba" id="Q925N2"/>
<dbReference type="Antibodypedia" id="18077">
    <property type="antibodies" value="74 antibodies from 18 providers"/>
</dbReference>
<dbReference type="DNASU" id="94279"/>
<dbReference type="Ensembl" id="ENSMUST00000026011.8">
    <property type="protein sequence ID" value="ENSMUSP00000026011.7"/>
    <property type="gene ID" value="ENSMUSG00000025036.8"/>
</dbReference>
<dbReference type="GeneID" id="94279"/>
<dbReference type="KEGG" id="mmu:94279"/>
<dbReference type="UCSC" id="uc008htu.1">
    <property type="organism name" value="mouse"/>
</dbReference>
<dbReference type="AGR" id="MGI:2137678"/>
<dbReference type="CTD" id="118980"/>
<dbReference type="MGI" id="MGI:2137678">
    <property type="gene designation" value="Sfxn2"/>
</dbReference>
<dbReference type="VEuPathDB" id="HostDB:ENSMUSG00000025036"/>
<dbReference type="eggNOG" id="KOG3767">
    <property type="taxonomic scope" value="Eukaryota"/>
</dbReference>
<dbReference type="GeneTree" id="ENSGT01030000234641"/>
<dbReference type="HOGENOM" id="CLU_039425_1_0_1"/>
<dbReference type="InParanoid" id="Q925N2"/>
<dbReference type="OMA" id="LQRYVPF"/>
<dbReference type="OrthoDB" id="6608471at2759"/>
<dbReference type="PhylomeDB" id="Q925N2"/>
<dbReference type="TreeFam" id="TF313205"/>
<dbReference type="BioGRID-ORCS" id="94279">
    <property type="hits" value="2 hits in 76 CRISPR screens"/>
</dbReference>
<dbReference type="ChiTaRS" id="Sfxn2">
    <property type="organism name" value="mouse"/>
</dbReference>
<dbReference type="PRO" id="PR:Q925N2"/>
<dbReference type="Proteomes" id="UP000000589">
    <property type="component" value="Chromosome 19"/>
</dbReference>
<dbReference type="RNAct" id="Q925N2">
    <property type="molecule type" value="protein"/>
</dbReference>
<dbReference type="Bgee" id="ENSMUSG00000025036">
    <property type="expression patterns" value="Expressed in rostral migratory stream and 250 other cell types or tissues"/>
</dbReference>
<dbReference type="ExpressionAtlas" id="Q925N2">
    <property type="expression patterns" value="baseline and differential"/>
</dbReference>
<dbReference type="GO" id="GO:0005743">
    <property type="term" value="C:mitochondrial inner membrane"/>
    <property type="evidence" value="ECO:0007005"/>
    <property type="project" value="MGI"/>
</dbReference>
<dbReference type="GO" id="GO:0005741">
    <property type="term" value="C:mitochondrial outer membrane"/>
    <property type="evidence" value="ECO:0007669"/>
    <property type="project" value="UniProtKB-SubCell"/>
</dbReference>
<dbReference type="GO" id="GO:0005739">
    <property type="term" value="C:mitochondrion"/>
    <property type="evidence" value="ECO:0007005"/>
    <property type="project" value="MGI"/>
</dbReference>
<dbReference type="GO" id="GO:0015075">
    <property type="term" value="F:monoatomic ion transmembrane transporter activity"/>
    <property type="evidence" value="ECO:0007669"/>
    <property type="project" value="InterPro"/>
</dbReference>
<dbReference type="GO" id="GO:0006865">
    <property type="term" value="P:amino acid transport"/>
    <property type="evidence" value="ECO:0007669"/>
    <property type="project" value="UniProtKB-KW"/>
</dbReference>
<dbReference type="GO" id="GO:1990542">
    <property type="term" value="P:mitochondrial transmembrane transport"/>
    <property type="evidence" value="ECO:0000250"/>
    <property type="project" value="UniProtKB"/>
</dbReference>
<dbReference type="InterPro" id="IPR004686">
    <property type="entry name" value="Mtc"/>
</dbReference>
<dbReference type="NCBIfam" id="TIGR00798">
    <property type="entry name" value="mtc"/>
    <property type="match status" value="1"/>
</dbReference>
<dbReference type="PANTHER" id="PTHR11153">
    <property type="entry name" value="SIDEROFLEXIN"/>
    <property type="match status" value="1"/>
</dbReference>
<dbReference type="PANTHER" id="PTHR11153:SF14">
    <property type="entry name" value="SIDEROFLEXIN-2"/>
    <property type="match status" value="1"/>
</dbReference>
<dbReference type="Pfam" id="PF03820">
    <property type="entry name" value="SFXNs"/>
    <property type="match status" value="1"/>
</dbReference>
<protein>
    <recommendedName>
        <fullName evidence="5">Sideroflexin-2</fullName>
    </recommendedName>
</protein>
<proteinExistence type="evidence at protein level"/>
<organism>
    <name type="scientific">Mus musculus</name>
    <name type="common">Mouse</name>
    <dbReference type="NCBI Taxonomy" id="10090"/>
    <lineage>
        <taxon>Eukaryota</taxon>
        <taxon>Metazoa</taxon>
        <taxon>Chordata</taxon>
        <taxon>Craniata</taxon>
        <taxon>Vertebrata</taxon>
        <taxon>Euteleostomi</taxon>
        <taxon>Mammalia</taxon>
        <taxon>Eutheria</taxon>
        <taxon>Euarchontoglires</taxon>
        <taxon>Glires</taxon>
        <taxon>Rodentia</taxon>
        <taxon>Myomorpha</taxon>
        <taxon>Muroidea</taxon>
        <taxon>Muridae</taxon>
        <taxon>Murinae</taxon>
        <taxon>Mus</taxon>
        <taxon>Mus</taxon>
    </lineage>
</organism>
<reference key="1">
    <citation type="journal article" date="2001" name="Genes Dev.">
        <title>A mutation in a mitochondrial transmembrane protein is responsible for the pleiotropic hematological and skeletal phenotype of flexed-tail (f/f) mice.</title>
        <authorList>
            <person name="Fleming M.D."/>
            <person name="Campagna D.R."/>
            <person name="Haslett J.N."/>
            <person name="Trenor C.C. III"/>
            <person name="Andrews N.C."/>
        </authorList>
    </citation>
    <scope>NUCLEOTIDE SEQUENCE [MRNA]</scope>
    <scope>TISSUE SPECIFICITY</scope>
</reference>
<reference key="2">
    <citation type="journal article" date="2004" name="Genome Res.">
        <title>The status, quality, and expansion of the NIH full-length cDNA project: the Mammalian Gene Collection (MGC).</title>
        <authorList>
            <consortium name="The MGC Project Team"/>
        </authorList>
    </citation>
    <scope>NUCLEOTIDE SEQUENCE [LARGE SCALE MRNA]</scope>
    <source>
        <tissue>Kidney</tissue>
    </source>
</reference>
<reference key="3">
    <citation type="journal article" date="2010" name="Cell">
        <title>A tissue-specific atlas of mouse protein phosphorylation and expression.</title>
        <authorList>
            <person name="Huttlin E.L."/>
            <person name="Jedrychowski M.P."/>
            <person name="Elias J.E."/>
            <person name="Goswami T."/>
            <person name="Rad R."/>
            <person name="Beausoleil S.A."/>
            <person name="Villen J."/>
            <person name="Haas W."/>
            <person name="Sowa M.E."/>
            <person name="Gygi S.P."/>
        </authorList>
    </citation>
    <scope>IDENTIFICATION BY MASS SPECTROMETRY [LARGE SCALE ANALYSIS]</scope>
    <source>
        <tissue>Kidney</tissue>
        <tissue>Liver</tissue>
        <tissue>Pancreas</tissue>
        <tissue>Spleen</tissue>
    </source>
</reference>
<reference key="4">
    <citation type="journal article" date="2019" name="J. Physiol. Sci.">
        <title>Regulation of mitochondrial iron homeostasis by sideroflexin 2.</title>
        <authorList>
            <person name="Mon E.E."/>
            <person name="Wei F.Y."/>
            <person name="Ahmad R.N.R."/>
            <person name="Yamamoto T."/>
            <person name="Moroishi T."/>
            <person name="Tomizawa K."/>
        </authorList>
    </citation>
    <scope>TISSUE SPECIFICITY</scope>
</reference>